<name>EFGM_ASPOR</name>
<gene>
    <name type="primary">mef1</name>
    <name type="ORF">AO090023000758</name>
</gene>
<proteinExistence type="inferred from homology"/>
<protein>
    <recommendedName>
        <fullName evidence="1">Elongation factor G, mitochondrial</fullName>
        <shortName evidence="1">EF-Gmt</shortName>
    </recommendedName>
    <alternativeName>
        <fullName evidence="1">Elongation factor G 1, mitochondrial</fullName>
        <shortName evidence="1">mEF-G 1</shortName>
    </alternativeName>
    <alternativeName>
        <fullName evidence="1">Elongation factor G1</fullName>
    </alternativeName>
</protein>
<evidence type="ECO:0000255" key="1">
    <source>
        <dbReference type="HAMAP-Rule" id="MF_03061"/>
    </source>
</evidence>
<evidence type="ECO:0000305" key="2"/>
<dbReference type="EMBL" id="BA000051">
    <property type="protein sequence ID" value="BAE59263.1"/>
    <property type="molecule type" value="Genomic_DNA"/>
</dbReference>
<dbReference type="RefSeq" id="XP_001821265.1">
    <property type="nucleotide sequence ID" value="XM_001821213.1"/>
</dbReference>
<dbReference type="SMR" id="Q2UGQ2"/>
<dbReference type="STRING" id="510516.Q2UGQ2"/>
<dbReference type="EnsemblFungi" id="BAE59263">
    <property type="protein sequence ID" value="BAE59263"/>
    <property type="gene ID" value="AO090023000758"/>
</dbReference>
<dbReference type="GeneID" id="5993267"/>
<dbReference type="KEGG" id="aor:AO090023000758"/>
<dbReference type="VEuPathDB" id="FungiDB:AO090023000758"/>
<dbReference type="HOGENOM" id="CLU_002794_4_0_1"/>
<dbReference type="OMA" id="GQFAKVQ"/>
<dbReference type="OrthoDB" id="39464at5052"/>
<dbReference type="UniPathway" id="UPA00345"/>
<dbReference type="Proteomes" id="UP000006564">
    <property type="component" value="Chromosome 3"/>
</dbReference>
<dbReference type="GO" id="GO:0005739">
    <property type="term" value="C:mitochondrion"/>
    <property type="evidence" value="ECO:0007669"/>
    <property type="project" value="UniProtKB-SubCell"/>
</dbReference>
<dbReference type="GO" id="GO:0005525">
    <property type="term" value="F:GTP binding"/>
    <property type="evidence" value="ECO:0007669"/>
    <property type="project" value="UniProtKB-UniRule"/>
</dbReference>
<dbReference type="GO" id="GO:0003924">
    <property type="term" value="F:GTPase activity"/>
    <property type="evidence" value="ECO:0007669"/>
    <property type="project" value="UniProtKB-UniRule"/>
</dbReference>
<dbReference type="GO" id="GO:0003746">
    <property type="term" value="F:translation elongation factor activity"/>
    <property type="evidence" value="ECO:0007669"/>
    <property type="project" value="UniProtKB-UniRule"/>
</dbReference>
<dbReference type="GO" id="GO:0070125">
    <property type="term" value="P:mitochondrial translational elongation"/>
    <property type="evidence" value="ECO:0007669"/>
    <property type="project" value="UniProtKB-UniRule"/>
</dbReference>
<dbReference type="CDD" id="cd01886">
    <property type="entry name" value="EF-G"/>
    <property type="match status" value="1"/>
</dbReference>
<dbReference type="CDD" id="cd16262">
    <property type="entry name" value="EFG_III"/>
    <property type="match status" value="1"/>
</dbReference>
<dbReference type="CDD" id="cd01434">
    <property type="entry name" value="EFG_mtEFG1_IV"/>
    <property type="match status" value="1"/>
</dbReference>
<dbReference type="CDD" id="cd04091">
    <property type="entry name" value="mtEFG1_II_like"/>
    <property type="match status" value="1"/>
</dbReference>
<dbReference type="FunFam" id="3.30.230.10:FF:000003">
    <property type="entry name" value="Elongation factor G"/>
    <property type="match status" value="1"/>
</dbReference>
<dbReference type="FunFam" id="3.30.70.870:FF:000001">
    <property type="entry name" value="Elongation factor G"/>
    <property type="match status" value="1"/>
</dbReference>
<dbReference type="FunFam" id="2.40.30.10:FF:000022">
    <property type="entry name" value="Elongation factor G, mitochondrial"/>
    <property type="match status" value="1"/>
</dbReference>
<dbReference type="FunFam" id="3.30.70.240:FF:000015">
    <property type="entry name" value="Elongation factor G, mitochondrial"/>
    <property type="match status" value="1"/>
</dbReference>
<dbReference type="FunFam" id="3.40.50.300:FF:000558">
    <property type="entry name" value="Elongation factor G, mitochondrial"/>
    <property type="match status" value="1"/>
</dbReference>
<dbReference type="Gene3D" id="3.30.230.10">
    <property type="match status" value="1"/>
</dbReference>
<dbReference type="Gene3D" id="3.30.70.240">
    <property type="match status" value="1"/>
</dbReference>
<dbReference type="Gene3D" id="3.30.70.870">
    <property type="entry name" value="Elongation Factor G (Translational Gtpase), domain 3"/>
    <property type="match status" value="1"/>
</dbReference>
<dbReference type="Gene3D" id="3.40.50.300">
    <property type="entry name" value="P-loop containing nucleotide triphosphate hydrolases"/>
    <property type="match status" value="1"/>
</dbReference>
<dbReference type="Gene3D" id="2.40.30.10">
    <property type="entry name" value="Translation factors"/>
    <property type="match status" value="1"/>
</dbReference>
<dbReference type="HAMAP" id="MF_00054_B">
    <property type="entry name" value="EF_G_EF_2_B"/>
    <property type="match status" value="1"/>
</dbReference>
<dbReference type="InterPro" id="IPR041095">
    <property type="entry name" value="EFG_II"/>
</dbReference>
<dbReference type="InterPro" id="IPR009022">
    <property type="entry name" value="EFG_III"/>
</dbReference>
<dbReference type="InterPro" id="IPR035647">
    <property type="entry name" value="EFG_III/V"/>
</dbReference>
<dbReference type="InterPro" id="IPR047872">
    <property type="entry name" value="EFG_IV"/>
</dbReference>
<dbReference type="InterPro" id="IPR000640">
    <property type="entry name" value="EFG_V-like"/>
</dbReference>
<dbReference type="InterPro" id="IPR004161">
    <property type="entry name" value="EFTu-like_2"/>
</dbReference>
<dbReference type="InterPro" id="IPR031157">
    <property type="entry name" value="G_TR_CS"/>
</dbReference>
<dbReference type="InterPro" id="IPR027417">
    <property type="entry name" value="P-loop_NTPase"/>
</dbReference>
<dbReference type="InterPro" id="IPR020568">
    <property type="entry name" value="Ribosomal_Su5_D2-typ_SF"/>
</dbReference>
<dbReference type="InterPro" id="IPR014721">
    <property type="entry name" value="Ribsml_uS5_D2-typ_fold_subgr"/>
</dbReference>
<dbReference type="InterPro" id="IPR005225">
    <property type="entry name" value="Small_GTP-bd"/>
</dbReference>
<dbReference type="InterPro" id="IPR000795">
    <property type="entry name" value="T_Tr_GTP-bd_dom"/>
</dbReference>
<dbReference type="InterPro" id="IPR009000">
    <property type="entry name" value="Transl_B-barrel_sf"/>
</dbReference>
<dbReference type="InterPro" id="IPR004540">
    <property type="entry name" value="Transl_elong_EFG/EF2"/>
</dbReference>
<dbReference type="InterPro" id="IPR005517">
    <property type="entry name" value="Transl_elong_EFG/EF2_IV"/>
</dbReference>
<dbReference type="NCBIfam" id="TIGR00484">
    <property type="entry name" value="EF-G"/>
    <property type="match status" value="1"/>
</dbReference>
<dbReference type="NCBIfam" id="NF009381">
    <property type="entry name" value="PRK12740.1-5"/>
    <property type="match status" value="1"/>
</dbReference>
<dbReference type="NCBIfam" id="TIGR00231">
    <property type="entry name" value="small_GTP"/>
    <property type="match status" value="1"/>
</dbReference>
<dbReference type="PANTHER" id="PTHR43636">
    <property type="entry name" value="ELONGATION FACTOR G, MITOCHONDRIAL"/>
    <property type="match status" value="1"/>
</dbReference>
<dbReference type="PANTHER" id="PTHR43636:SF2">
    <property type="entry name" value="ELONGATION FACTOR G, MITOCHONDRIAL"/>
    <property type="match status" value="1"/>
</dbReference>
<dbReference type="Pfam" id="PF00679">
    <property type="entry name" value="EFG_C"/>
    <property type="match status" value="1"/>
</dbReference>
<dbReference type="Pfam" id="PF14492">
    <property type="entry name" value="EFG_III"/>
    <property type="match status" value="1"/>
</dbReference>
<dbReference type="Pfam" id="PF03764">
    <property type="entry name" value="EFG_IV"/>
    <property type="match status" value="1"/>
</dbReference>
<dbReference type="Pfam" id="PF00009">
    <property type="entry name" value="GTP_EFTU"/>
    <property type="match status" value="1"/>
</dbReference>
<dbReference type="Pfam" id="PF03144">
    <property type="entry name" value="GTP_EFTU_D2"/>
    <property type="match status" value="1"/>
</dbReference>
<dbReference type="PRINTS" id="PR00315">
    <property type="entry name" value="ELONGATNFCT"/>
</dbReference>
<dbReference type="SMART" id="SM00838">
    <property type="entry name" value="EFG_C"/>
    <property type="match status" value="1"/>
</dbReference>
<dbReference type="SMART" id="SM00889">
    <property type="entry name" value="EFG_IV"/>
    <property type="match status" value="1"/>
</dbReference>
<dbReference type="SUPFAM" id="SSF54980">
    <property type="entry name" value="EF-G C-terminal domain-like"/>
    <property type="match status" value="2"/>
</dbReference>
<dbReference type="SUPFAM" id="SSF52540">
    <property type="entry name" value="P-loop containing nucleoside triphosphate hydrolases"/>
    <property type="match status" value="1"/>
</dbReference>
<dbReference type="SUPFAM" id="SSF54211">
    <property type="entry name" value="Ribosomal protein S5 domain 2-like"/>
    <property type="match status" value="1"/>
</dbReference>
<dbReference type="SUPFAM" id="SSF50447">
    <property type="entry name" value="Translation proteins"/>
    <property type="match status" value="1"/>
</dbReference>
<dbReference type="PROSITE" id="PS00301">
    <property type="entry name" value="G_TR_1"/>
    <property type="match status" value="1"/>
</dbReference>
<dbReference type="PROSITE" id="PS51722">
    <property type="entry name" value="G_TR_2"/>
    <property type="match status" value="1"/>
</dbReference>
<accession>Q2UGQ2</accession>
<keyword id="KW-0251">Elongation factor</keyword>
<keyword id="KW-0342">GTP-binding</keyword>
<keyword id="KW-0496">Mitochondrion</keyword>
<keyword id="KW-0547">Nucleotide-binding</keyword>
<keyword id="KW-0648">Protein biosynthesis</keyword>
<keyword id="KW-1185">Reference proteome</keyword>
<keyword id="KW-0809">Transit peptide</keyword>
<comment type="function">
    <text evidence="1">Mitochondrial GTPase that catalyzes the GTP-dependent ribosomal translocation step during translation elongation. During this step, the ribosome changes from the pre-translocational (PRE) to the post-translocational (POST) state as the newly formed A-site-bound peptidyl-tRNA and P-site-bound deacylated tRNA move to the P and E sites, respectively. Catalyzes the coordinated movement of the two tRNA molecules, the mRNA and conformational changes in the ribosome.</text>
</comment>
<comment type="pathway">
    <text evidence="1">Protein biosynthesis; polypeptide chain elongation.</text>
</comment>
<comment type="subcellular location">
    <subcellularLocation>
        <location evidence="1">Mitochondrion</location>
    </subcellularLocation>
</comment>
<comment type="similarity">
    <text evidence="2">Belongs to the TRAFAC class translation factor GTPase superfamily. Classic translation factor GTPase family. EF-G/EF-2 subfamily.</text>
</comment>
<reference key="1">
    <citation type="journal article" date="2005" name="Nature">
        <title>Genome sequencing and analysis of Aspergillus oryzae.</title>
        <authorList>
            <person name="Machida M."/>
            <person name="Asai K."/>
            <person name="Sano M."/>
            <person name="Tanaka T."/>
            <person name="Kumagai T."/>
            <person name="Terai G."/>
            <person name="Kusumoto K."/>
            <person name="Arima T."/>
            <person name="Akita O."/>
            <person name="Kashiwagi Y."/>
            <person name="Abe K."/>
            <person name="Gomi K."/>
            <person name="Horiuchi H."/>
            <person name="Kitamoto K."/>
            <person name="Kobayashi T."/>
            <person name="Takeuchi M."/>
            <person name="Denning D.W."/>
            <person name="Galagan J.E."/>
            <person name="Nierman W.C."/>
            <person name="Yu J."/>
            <person name="Archer D.B."/>
            <person name="Bennett J.W."/>
            <person name="Bhatnagar D."/>
            <person name="Cleveland T.E."/>
            <person name="Fedorova N.D."/>
            <person name="Gotoh O."/>
            <person name="Horikawa H."/>
            <person name="Hosoyama A."/>
            <person name="Ichinomiya M."/>
            <person name="Igarashi R."/>
            <person name="Iwashita K."/>
            <person name="Juvvadi P.R."/>
            <person name="Kato M."/>
            <person name="Kato Y."/>
            <person name="Kin T."/>
            <person name="Kokubun A."/>
            <person name="Maeda H."/>
            <person name="Maeyama N."/>
            <person name="Maruyama J."/>
            <person name="Nagasaki H."/>
            <person name="Nakajima T."/>
            <person name="Oda K."/>
            <person name="Okada K."/>
            <person name="Paulsen I."/>
            <person name="Sakamoto K."/>
            <person name="Sawano T."/>
            <person name="Takahashi M."/>
            <person name="Takase K."/>
            <person name="Terabayashi Y."/>
            <person name="Wortman J.R."/>
            <person name="Yamada O."/>
            <person name="Yamagata Y."/>
            <person name="Anazawa H."/>
            <person name="Hata Y."/>
            <person name="Koide Y."/>
            <person name="Komori T."/>
            <person name="Koyama Y."/>
            <person name="Minetoki T."/>
            <person name="Suharnan S."/>
            <person name="Tanaka A."/>
            <person name="Isono K."/>
            <person name="Kuhara S."/>
            <person name="Ogasawara N."/>
            <person name="Kikuchi H."/>
        </authorList>
    </citation>
    <scope>NUCLEOTIDE SEQUENCE [LARGE SCALE GENOMIC DNA]</scope>
    <source>
        <strain>ATCC 42149 / RIB 40</strain>
    </source>
</reference>
<organism>
    <name type="scientific">Aspergillus oryzae (strain ATCC 42149 / RIB 40)</name>
    <name type="common">Yellow koji mold</name>
    <dbReference type="NCBI Taxonomy" id="510516"/>
    <lineage>
        <taxon>Eukaryota</taxon>
        <taxon>Fungi</taxon>
        <taxon>Dikarya</taxon>
        <taxon>Ascomycota</taxon>
        <taxon>Pezizomycotina</taxon>
        <taxon>Eurotiomycetes</taxon>
        <taxon>Eurotiomycetidae</taxon>
        <taxon>Eurotiales</taxon>
        <taxon>Aspergillaceae</taxon>
        <taxon>Aspergillus</taxon>
        <taxon>Aspergillus subgen. Circumdati</taxon>
    </lineage>
</organism>
<feature type="transit peptide" description="Mitochondrion" evidence="1">
    <location>
        <begin position="1"/>
        <end position="34"/>
    </location>
</feature>
<feature type="chain" id="PRO_0000385561" description="Elongation factor G, mitochondrial">
    <location>
        <begin position="35"/>
        <end position="799"/>
    </location>
</feature>
<feature type="domain" description="tr-type G">
    <location>
        <begin position="97"/>
        <end position="384"/>
    </location>
</feature>
<feature type="binding site" evidence="1">
    <location>
        <begin position="106"/>
        <end position="113"/>
    </location>
    <ligand>
        <name>GTP</name>
        <dbReference type="ChEBI" id="CHEBI:37565"/>
    </ligand>
</feature>
<feature type="binding site" evidence="1">
    <location>
        <begin position="182"/>
        <end position="186"/>
    </location>
    <ligand>
        <name>GTP</name>
        <dbReference type="ChEBI" id="CHEBI:37565"/>
    </ligand>
</feature>
<feature type="binding site" evidence="1">
    <location>
        <begin position="236"/>
        <end position="239"/>
    </location>
    <ligand>
        <name>GTP</name>
        <dbReference type="ChEBI" id="CHEBI:37565"/>
    </ligand>
</feature>
<sequence>MRCPSLTRLPYRAVSGLPRSVVRLQSQNFLTRRCASTAVLRSPTAAPAYQSILNKHLQQRRNASGTAAAVLEAAASDNLSQEAIIENLDPVEAGRLSRVRNIGIAAHIDSGKTTCTERVLFYTGRIKAIHEVRGGDKVGAKMDSMDLEREKGITIQSAATFCDWVKKDEDGKENKYHFNLIDTPGHIDFTIEVERALRVLDGAVMILCAVSGVQSQTITVDRQMRRYNVPRISFVNKMDRMGANPFKAVDQINNKLKLPAAAVQVPIGAEDEFEGVVDLIRMKAIYNRGPSGEELFETEEIPEKVKSTVEERRKKLIETLADVDDEIAELFILEEEPTEQQLKAAIRRATIGLKFTPVFMGSALANKSVQPMLDGVVDYLPNPAEVQNLALDKKRDEASVQLVPYQSLPLVGLAFKLEESNFGQLTYIRVYQGTLRKGANVFNARNDKKIKIPRIVRMHSNEMEEVSEVGAGEICAVFGVDCASGDTFTDGQLGYTMSSMFVPEPVISLSIKPKNNKDAAKFSKAMARFQREDPTFRVTYDVESEQTLISGMGELHLDIYVERMRREYNVDCETGPPQVAYRETIGNRVEFDHLLKKQSGGPGDYARVVGWMEPTGKLDDNVFEEQIVGGSISEKFLFACEKGFHLACEKGPLIGHKVLGTKMVINDGATHMTDSSEMSFKNATQQAFRKAFKESNPSVLEPMMKTVVTAPAEFQGDVISLLNKRNATINDSEVGVDEFTVYADCSLNGMFGFSSNLRAATQGKGEYTMEFSHYEKCPPQVQKELIAKYLKAQADRHKK</sequence>